<sequence length="238" mass="26965">MIINAKGPASFAEKYIVRSIWDNKFPPGSILPAERELSELIGVTRTTLREVLQRLARDGWLKIQHGKPTRVNNFWETSGLNILETIADLNPEGFPVLVDQLLSARTNVSAIYFRGALRYNPDTAVDVLAKIHQLEDTAESYAEFDYLLHHTLAFSSGNPLYVLILNGFKGLYSRVGRYYFTSSDARLLALNFYKELELLAQAKNYLDVPALMRTYGMNSGKMWLQLRDDMPASIAQDN</sequence>
<feature type="chain" id="PRO_1000045465" description="Fatty acid metabolism regulator protein">
    <location>
        <begin position="1"/>
        <end position="238"/>
    </location>
</feature>
<feature type="domain" description="HTH gntR-type" evidence="1">
    <location>
        <begin position="6"/>
        <end position="74"/>
    </location>
</feature>
<feature type="DNA-binding region" description="H-T-H motif" evidence="1">
    <location>
        <begin position="34"/>
        <end position="53"/>
    </location>
</feature>
<organism>
    <name type="scientific">Shewanella baltica (strain OS185)</name>
    <dbReference type="NCBI Taxonomy" id="402882"/>
    <lineage>
        <taxon>Bacteria</taxon>
        <taxon>Pseudomonadati</taxon>
        <taxon>Pseudomonadota</taxon>
        <taxon>Gammaproteobacteria</taxon>
        <taxon>Alteromonadales</taxon>
        <taxon>Shewanellaceae</taxon>
        <taxon>Shewanella</taxon>
    </lineage>
</organism>
<dbReference type="EMBL" id="CP000753">
    <property type="protein sequence ID" value="ABS07914.1"/>
    <property type="molecule type" value="Genomic_DNA"/>
</dbReference>
<dbReference type="RefSeq" id="WP_006081284.1">
    <property type="nucleotide sequence ID" value="NC_009665.1"/>
</dbReference>
<dbReference type="SMR" id="A6WM75"/>
<dbReference type="GeneID" id="11772034"/>
<dbReference type="KEGG" id="sbm:Shew185_1771"/>
<dbReference type="HOGENOM" id="CLU_017584_9_4_6"/>
<dbReference type="GO" id="GO:0005737">
    <property type="term" value="C:cytoplasm"/>
    <property type="evidence" value="ECO:0007669"/>
    <property type="project" value="UniProtKB-SubCell"/>
</dbReference>
<dbReference type="GO" id="GO:0003677">
    <property type="term" value="F:DNA binding"/>
    <property type="evidence" value="ECO:0007669"/>
    <property type="project" value="UniProtKB-KW"/>
</dbReference>
<dbReference type="GO" id="GO:0003700">
    <property type="term" value="F:DNA-binding transcription factor activity"/>
    <property type="evidence" value="ECO:0007669"/>
    <property type="project" value="UniProtKB-UniRule"/>
</dbReference>
<dbReference type="GO" id="GO:0000062">
    <property type="term" value="F:fatty-acyl-CoA binding"/>
    <property type="evidence" value="ECO:0007669"/>
    <property type="project" value="InterPro"/>
</dbReference>
<dbReference type="GO" id="GO:0006631">
    <property type="term" value="P:fatty acid metabolic process"/>
    <property type="evidence" value="ECO:0007669"/>
    <property type="project" value="UniProtKB-KW"/>
</dbReference>
<dbReference type="GO" id="GO:0019217">
    <property type="term" value="P:regulation of fatty acid metabolic process"/>
    <property type="evidence" value="ECO:0007669"/>
    <property type="project" value="UniProtKB-UniRule"/>
</dbReference>
<dbReference type="CDD" id="cd07377">
    <property type="entry name" value="WHTH_GntR"/>
    <property type="match status" value="1"/>
</dbReference>
<dbReference type="Gene3D" id="1.20.120.530">
    <property type="entry name" value="GntR ligand-binding domain-like"/>
    <property type="match status" value="1"/>
</dbReference>
<dbReference type="Gene3D" id="1.10.10.10">
    <property type="entry name" value="Winged helix-like DNA-binding domain superfamily/Winged helix DNA-binding domain"/>
    <property type="match status" value="1"/>
</dbReference>
<dbReference type="HAMAP" id="MF_00696">
    <property type="entry name" value="HTH_FadR"/>
    <property type="match status" value="1"/>
</dbReference>
<dbReference type="InterPro" id="IPR014178">
    <property type="entry name" value="FA-response_TF_FadR"/>
</dbReference>
<dbReference type="InterPro" id="IPR028374">
    <property type="entry name" value="FadR_C"/>
</dbReference>
<dbReference type="InterPro" id="IPR008920">
    <property type="entry name" value="TF_FadR/GntR_C"/>
</dbReference>
<dbReference type="InterPro" id="IPR000524">
    <property type="entry name" value="Tscrpt_reg_HTH_GntR"/>
</dbReference>
<dbReference type="InterPro" id="IPR036388">
    <property type="entry name" value="WH-like_DNA-bd_sf"/>
</dbReference>
<dbReference type="InterPro" id="IPR036390">
    <property type="entry name" value="WH_DNA-bd_sf"/>
</dbReference>
<dbReference type="NCBIfam" id="TIGR02812">
    <property type="entry name" value="fadR_gamma"/>
    <property type="match status" value="1"/>
</dbReference>
<dbReference type="NCBIfam" id="NF003444">
    <property type="entry name" value="PRK04984.1"/>
    <property type="match status" value="1"/>
</dbReference>
<dbReference type="PANTHER" id="PTHR43537:SF52">
    <property type="entry name" value="FATTY ACID METABOLISM REGULATOR PROTEIN"/>
    <property type="match status" value="1"/>
</dbReference>
<dbReference type="PANTHER" id="PTHR43537">
    <property type="entry name" value="TRANSCRIPTIONAL REGULATOR, GNTR FAMILY"/>
    <property type="match status" value="1"/>
</dbReference>
<dbReference type="Pfam" id="PF07840">
    <property type="entry name" value="FadR_C"/>
    <property type="match status" value="1"/>
</dbReference>
<dbReference type="Pfam" id="PF00392">
    <property type="entry name" value="GntR"/>
    <property type="match status" value="1"/>
</dbReference>
<dbReference type="PRINTS" id="PR00035">
    <property type="entry name" value="HTHGNTR"/>
</dbReference>
<dbReference type="SMART" id="SM00345">
    <property type="entry name" value="HTH_GNTR"/>
    <property type="match status" value="1"/>
</dbReference>
<dbReference type="SUPFAM" id="SSF48008">
    <property type="entry name" value="GntR ligand-binding domain-like"/>
    <property type="match status" value="1"/>
</dbReference>
<dbReference type="SUPFAM" id="SSF46785">
    <property type="entry name" value="Winged helix' DNA-binding domain"/>
    <property type="match status" value="1"/>
</dbReference>
<dbReference type="PROSITE" id="PS50949">
    <property type="entry name" value="HTH_GNTR"/>
    <property type="match status" value="1"/>
</dbReference>
<reference key="1">
    <citation type="submission" date="2007-07" db="EMBL/GenBank/DDBJ databases">
        <title>Complete sequence of chromosome of Shewanella baltica OS185.</title>
        <authorList>
            <consortium name="US DOE Joint Genome Institute"/>
            <person name="Copeland A."/>
            <person name="Lucas S."/>
            <person name="Lapidus A."/>
            <person name="Barry K."/>
            <person name="Glavina del Rio T."/>
            <person name="Dalin E."/>
            <person name="Tice H."/>
            <person name="Pitluck S."/>
            <person name="Sims D."/>
            <person name="Brettin T."/>
            <person name="Bruce D."/>
            <person name="Detter J.C."/>
            <person name="Han C."/>
            <person name="Schmutz J."/>
            <person name="Larimer F."/>
            <person name="Land M."/>
            <person name="Hauser L."/>
            <person name="Kyrpides N."/>
            <person name="Mikhailova N."/>
            <person name="Brettar I."/>
            <person name="Rodrigues J."/>
            <person name="Konstantinidis K."/>
            <person name="Tiedje J."/>
            <person name="Richardson P."/>
        </authorList>
    </citation>
    <scope>NUCLEOTIDE SEQUENCE [LARGE SCALE GENOMIC DNA]</scope>
    <source>
        <strain>OS185</strain>
    </source>
</reference>
<protein>
    <recommendedName>
        <fullName evidence="1">Fatty acid metabolism regulator protein</fullName>
    </recommendedName>
</protein>
<accession>A6WM75</accession>
<evidence type="ECO:0000255" key="1">
    <source>
        <dbReference type="HAMAP-Rule" id="MF_00696"/>
    </source>
</evidence>
<keyword id="KW-0010">Activator</keyword>
<keyword id="KW-0963">Cytoplasm</keyword>
<keyword id="KW-0238">DNA-binding</keyword>
<keyword id="KW-0276">Fatty acid metabolism</keyword>
<keyword id="KW-0443">Lipid metabolism</keyword>
<keyword id="KW-0678">Repressor</keyword>
<keyword id="KW-0804">Transcription</keyword>
<keyword id="KW-0805">Transcription regulation</keyword>
<name>FADR_SHEB8</name>
<gene>
    <name evidence="1" type="primary">fadR</name>
    <name type="ordered locus">Shew185_1771</name>
</gene>
<comment type="function">
    <text evidence="1">Multifunctional regulator of fatty acid metabolism.</text>
</comment>
<comment type="subunit">
    <text evidence="1">Homodimer.</text>
</comment>
<comment type="subcellular location">
    <subcellularLocation>
        <location evidence="1">Cytoplasm</location>
    </subcellularLocation>
</comment>
<proteinExistence type="inferred from homology"/>